<protein>
    <recommendedName>
        <fullName evidence="1">D-aminoacyl-tRNA deacylase</fullName>
        <shortName evidence="1">DTD</shortName>
        <ecNumber evidence="1">3.1.1.96</ecNumber>
    </recommendedName>
    <alternativeName>
        <fullName evidence="1">Gly-tRNA(Ala) deacylase</fullName>
    </alternativeName>
</protein>
<proteinExistence type="inferred from homology"/>
<sequence length="145" mass="15926">MIALIQRVTRASVTVEDEVTGEIGPGLLVLLGVEKEDDEQKANRLCERVLGYRIFSDADGKMNLNVQQAGGSVLVVSQFTLAADTERGMRPSFSGGAAPDRAQALYEYFVERCRQQAINTQTGRFAADMQVELVNDGPVTFWLQV</sequence>
<evidence type="ECO:0000255" key="1">
    <source>
        <dbReference type="HAMAP-Rule" id="MF_00518"/>
    </source>
</evidence>
<keyword id="KW-0963">Cytoplasm</keyword>
<keyword id="KW-0378">Hydrolase</keyword>
<keyword id="KW-0694">RNA-binding</keyword>
<keyword id="KW-0820">tRNA-binding</keyword>
<accession>Q57HI8</accession>
<name>DTD_SALCH</name>
<gene>
    <name evidence="1" type="primary">dtd</name>
    <name type="ordered locus">SCH_3918</name>
</gene>
<dbReference type="EC" id="3.1.1.96" evidence="1"/>
<dbReference type="EMBL" id="AE017220">
    <property type="protein sequence ID" value="AAX67824.1"/>
    <property type="molecule type" value="Genomic_DNA"/>
</dbReference>
<dbReference type="RefSeq" id="WP_000560969.1">
    <property type="nucleotide sequence ID" value="NC_006905.1"/>
</dbReference>
<dbReference type="SMR" id="Q57HI8"/>
<dbReference type="KEGG" id="sec:SCH_3918"/>
<dbReference type="HOGENOM" id="CLU_076901_1_0_6"/>
<dbReference type="Proteomes" id="UP000000538">
    <property type="component" value="Chromosome"/>
</dbReference>
<dbReference type="GO" id="GO:0005737">
    <property type="term" value="C:cytoplasm"/>
    <property type="evidence" value="ECO:0007669"/>
    <property type="project" value="UniProtKB-SubCell"/>
</dbReference>
<dbReference type="GO" id="GO:0051500">
    <property type="term" value="F:D-tyrosyl-tRNA(Tyr) deacylase activity"/>
    <property type="evidence" value="ECO:0007669"/>
    <property type="project" value="TreeGrafter"/>
</dbReference>
<dbReference type="GO" id="GO:0106026">
    <property type="term" value="F:Gly-tRNA(Ala) deacylase activity"/>
    <property type="evidence" value="ECO:0007669"/>
    <property type="project" value="UniProtKB-UniRule"/>
</dbReference>
<dbReference type="GO" id="GO:0043908">
    <property type="term" value="F:Ser(Gly)-tRNA(Ala) hydrolase activity"/>
    <property type="evidence" value="ECO:0007669"/>
    <property type="project" value="UniProtKB-UniRule"/>
</dbReference>
<dbReference type="GO" id="GO:0000049">
    <property type="term" value="F:tRNA binding"/>
    <property type="evidence" value="ECO:0007669"/>
    <property type="project" value="UniProtKB-UniRule"/>
</dbReference>
<dbReference type="GO" id="GO:0019478">
    <property type="term" value="P:D-amino acid catabolic process"/>
    <property type="evidence" value="ECO:0007669"/>
    <property type="project" value="UniProtKB-UniRule"/>
</dbReference>
<dbReference type="CDD" id="cd00563">
    <property type="entry name" value="Dtyr_deacylase"/>
    <property type="match status" value="1"/>
</dbReference>
<dbReference type="FunFam" id="3.50.80.10:FF:000001">
    <property type="entry name" value="D-aminoacyl-tRNA deacylase"/>
    <property type="match status" value="1"/>
</dbReference>
<dbReference type="Gene3D" id="3.50.80.10">
    <property type="entry name" value="D-tyrosyl-tRNA(Tyr) deacylase"/>
    <property type="match status" value="1"/>
</dbReference>
<dbReference type="HAMAP" id="MF_00518">
    <property type="entry name" value="Deacylase_Dtd"/>
    <property type="match status" value="1"/>
</dbReference>
<dbReference type="InterPro" id="IPR003732">
    <property type="entry name" value="Daa-tRNA_deacyls_DTD"/>
</dbReference>
<dbReference type="InterPro" id="IPR023509">
    <property type="entry name" value="DTD-like_sf"/>
</dbReference>
<dbReference type="NCBIfam" id="TIGR00256">
    <property type="entry name" value="D-aminoacyl-tRNA deacylase"/>
    <property type="match status" value="1"/>
</dbReference>
<dbReference type="PANTHER" id="PTHR10472:SF5">
    <property type="entry name" value="D-AMINOACYL-TRNA DEACYLASE 1"/>
    <property type="match status" value="1"/>
</dbReference>
<dbReference type="PANTHER" id="PTHR10472">
    <property type="entry name" value="D-TYROSYL-TRNA TYR DEACYLASE"/>
    <property type="match status" value="1"/>
</dbReference>
<dbReference type="Pfam" id="PF02580">
    <property type="entry name" value="Tyr_Deacylase"/>
    <property type="match status" value="1"/>
</dbReference>
<dbReference type="SUPFAM" id="SSF69500">
    <property type="entry name" value="DTD-like"/>
    <property type="match status" value="1"/>
</dbReference>
<reference key="1">
    <citation type="journal article" date="2005" name="Nucleic Acids Res.">
        <title>The genome sequence of Salmonella enterica serovar Choleraesuis, a highly invasive and resistant zoonotic pathogen.</title>
        <authorList>
            <person name="Chiu C.-H."/>
            <person name="Tang P."/>
            <person name="Chu C."/>
            <person name="Hu S."/>
            <person name="Bao Q."/>
            <person name="Yu J."/>
            <person name="Chou Y.-Y."/>
            <person name="Wang H.-S."/>
            <person name="Lee Y.-S."/>
        </authorList>
    </citation>
    <scope>NUCLEOTIDE SEQUENCE [LARGE SCALE GENOMIC DNA]</scope>
    <source>
        <strain>SC-B67</strain>
    </source>
</reference>
<comment type="function">
    <text evidence="1">An aminoacyl-tRNA editing enzyme that deacylates mischarged D-aminoacyl-tRNAs. Also deacylates mischarged glycyl-tRNA(Ala), protecting cells against glycine mischarging by AlaRS. Acts via tRNA-based rather than protein-based catalysis; rejects L-amino acids rather than detecting D-amino acids in the active site. By recycling D-aminoacyl-tRNA to D-amino acids and free tRNA molecules, this enzyme counteracts the toxicity associated with the formation of D-aminoacyl-tRNA entities in vivo and helps enforce protein L-homochirality.</text>
</comment>
<comment type="catalytic activity">
    <reaction evidence="1">
        <text>glycyl-tRNA(Ala) + H2O = tRNA(Ala) + glycine + H(+)</text>
        <dbReference type="Rhea" id="RHEA:53744"/>
        <dbReference type="Rhea" id="RHEA-COMP:9657"/>
        <dbReference type="Rhea" id="RHEA-COMP:13640"/>
        <dbReference type="ChEBI" id="CHEBI:15377"/>
        <dbReference type="ChEBI" id="CHEBI:15378"/>
        <dbReference type="ChEBI" id="CHEBI:57305"/>
        <dbReference type="ChEBI" id="CHEBI:78442"/>
        <dbReference type="ChEBI" id="CHEBI:78522"/>
        <dbReference type="EC" id="3.1.1.96"/>
    </reaction>
</comment>
<comment type="catalytic activity">
    <reaction evidence="1">
        <text>a D-aminoacyl-tRNA + H2O = a tRNA + a D-alpha-amino acid + H(+)</text>
        <dbReference type="Rhea" id="RHEA:13953"/>
        <dbReference type="Rhea" id="RHEA-COMP:10123"/>
        <dbReference type="Rhea" id="RHEA-COMP:10124"/>
        <dbReference type="ChEBI" id="CHEBI:15377"/>
        <dbReference type="ChEBI" id="CHEBI:15378"/>
        <dbReference type="ChEBI" id="CHEBI:59871"/>
        <dbReference type="ChEBI" id="CHEBI:78442"/>
        <dbReference type="ChEBI" id="CHEBI:79333"/>
        <dbReference type="EC" id="3.1.1.96"/>
    </reaction>
</comment>
<comment type="subunit">
    <text evidence="1">Homodimer.</text>
</comment>
<comment type="subcellular location">
    <subcellularLocation>
        <location evidence="1">Cytoplasm</location>
    </subcellularLocation>
</comment>
<comment type="domain">
    <text evidence="1">A Gly-cisPro motif from one monomer fits into the active site of the other monomer to allow specific chiral rejection of L-amino acids.</text>
</comment>
<comment type="similarity">
    <text evidence="1">Belongs to the DTD family.</text>
</comment>
<organism>
    <name type="scientific">Salmonella choleraesuis (strain SC-B67)</name>
    <dbReference type="NCBI Taxonomy" id="321314"/>
    <lineage>
        <taxon>Bacteria</taxon>
        <taxon>Pseudomonadati</taxon>
        <taxon>Pseudomonadota</taxon>
        <taxon>Gammaproteobacteria</taxon>
        <taxon>Enterobacterales</taxon>
        <taxon>Enterobacteriaceae</taxon>
        <taxon>Salmonella</taxon>
    </lineage>
</organism>
<feature type="chain" id="PRO_0000259310" description="D-aminoacyl-tRNA deacylase">
    <location>
        <begin position="1"/>
        <end position="145"/>
    </location>
</feature>
<feature type="short sequence motif" description="Gly-cisPro motif, important for rejection of L-amino acids" evidence="1">
    <location>
        <begin position="137"/>
        <end position="138"/>
    </location>
</feature>